<reference key="1">
    <citation type="journal article" date="1998" name="Nat. Biotechnol.">
        <title>Cloning of cell-specific secreted and surface proteins by subtractive antibody screening.</title>
        <authorList>
            <person name="Scherer P.E."/>
            <person name="Bickel P.E."/>
            <person name="Kotler M."/>
            <person name="Lodish H.F."/>
        </authorList>
    </citation>
    <scope>NUCLEOTIDE SEQUENCE [MRNA] (ISOFORM 1)</scope>
    <scope>TISSUE SPECIFICITY</scope>
    <scope>SUBCELLULAR LOCATION</scope>
    <source>
        <tissue>Adipocyte</tissue>
    </source>
</reference>
<reference key="2">
    <citation type="journal article" date="2004" name="DNA Res.">
        <title>Prediction of the coding sequences of mouse homologues of KIAA gene: IV. The complete nucleotide sequences of 500 mouse KIAA-homologous cDNAs identified by screening of terminal sequences of cDNA clones randomly sampled from size-fractionated libraries.</title>
        <authorList>
            <person name="Okazaki N."/>
            <person name="Kikuno R."/>
            <person name="Ohara R."/>
            <person name="Inamoto S."/>
            <person name="Koseki H."/>
            <person name="Hiraoka S."/>
            <person name="Saga Y."/>
            <person name="Seino S."/>
            <person name="Nishimura M."/>
            <person name="Kaisho T."/>
            <person name="Hoshino K."/>
            <person name="Kitamura H."/>
            <person name="Nagase T."/>
            <person name="Ohara O."/>
            <person name="Koga H."/>
        </authorList>
    </citation>
    <scope>NUCLEOTIDE SEQUENCE [LARGE SCALE MRNA] (ISOFORM 2)</scope>
    <source>
        <tissue>Thymus</tissue>
    </source>
</reference>
<reference key="3">
    <citation type="journal article" date="2009" name="PLoS Biol.">
        <title>Lineage-specific biology revealed by a finished genome assembly of the mouse.</title>
        <authorList>
            <person name="Church D.M."/>
            <person name="Goodstadt L."/>
            <person name="Hillier L.W."/>
            <person name="Zody M.C."/>
            <person name="Goldstein S."/>
            <person name="She X."/>
            <person name="Bult C.J."/>
            <person name="Agarwala R."/>
            <person name="Cherry J.L."/>
            <person name="DiCuccio M."/>
            <person name="Hlavina W."/>
            <person name="Kapustin Y."/>
            <person name="Meric P."/>
            <person name="Maglott D."/>
            <person name="Birtle Z."/>
            <person name="Marques A.C."/>
            <person name="Graves T."/>
            <person name="Zhou S."/>
            <person name="Teague B."/>
            <person name="Potamousis K."/>
            <person name="Churas C."/>
            <person name="Place M."/>
            <person name="Herschleb J."/>
            <person name="Runnheim R."/>
            <person name="Forrest D."/>
            <person name="Amos-Landgraf J."/>
            <person name="Schwartz D.C."/>
            <person name="Cheng Z."/>
            <person name="Lindblad-Toh K."/>
            <person name="Eichler E.E."/>
            <person name="Ponting C.P."/>
        </authorList>
    </citation>
    <scope>NUCLEOTIDE SEQUENCE [LARGE SCALE GENOMIC DNA]</scope>
    <source>
        <strain>C57BL/6J</strain>
    </source>
</reference>
<reference key="4">
    <citation type="journal article" date="2005" name="Science">
        <title>The transcriptional landscape of the mammalian genome.</title>
        <authorList>
            <person name="Carninci P."/>
            <person name="Kasukawa T."/>
            <person name="Katayama S."/>
            <person name="Gough J."/>
            <person name="Frith M.C."/>
            <person name="Maeda N."/>
            <person name="Oyama R."/>
            <person name="Ravasi T."/>
            <person name="Lenhard B."/>
            <person name="Wells C."/>
            <person name="Kodzius R."/>
            <person name="Shimokawa K."/>
            <person name="Bajic V.B."/>
            <person name="Brenner S.E."/>
            <person name="Batalov S."/>
            <person name="Forrest A.R."/>
            <person name="Zavolan M."/>
            <person name="Davis M.J."/>
            <person name="Wilming L.G."/>
            <person name="Aidinis V."/>
            <person name="Allen J.E."/>
            <person name="Ambesi-Impiombato A."/>
            <person name="Apweiler R."/>
            <person name="Aturaliya R.N."/>
            <person name="Bailey T.L."/>
            <person name="Bansal M."/>
            <person name="Baxter L."/>
            <person name="Beisel K.W."/>
            <person name="Bersano T."/>
            <person name="Bono H."/>
            <person name="Chalk A.M."/>
            <person name="Chiu K.P."/>
            <person name="Choudhary V."/>
            <person name="Christoffels A."/>
            <person name="Clutterbuck D.R."/>
            <person name="Crowe M.L."/>
            <person name="Dalla E."/>
            <person name="Dalrymple B.P."/>
            <person name="de Bono B."/>
            <person name="Della Gatta G."/>
            <person name="di Bernardo D."/>
            <person name="Down T."/>
            <person name="Engstrom P."/>
            <person name="Fagiolini M."/>
            <person name="Faulkner G."/>
            <person name="Fletcher C.F."/>
            <person name="Fukushima T."/>
            <person name="Furuno M."/>
            <person name="Futaki S."/>
            <person name="Gariboldi M."/>
            <person name="Georgii-Hemming P."/>
            <person name="Gingeras T.R."/>
            <person name="Gojobori T."/>
            <person name="Green R.E."/>
            <person name="Gustincich S."/>
            <person name="Harbers M."/>
            <person name="Hayashi Y."/>
            <person name="Hensch T.K."/>
            <person name="Hirokawa N."/>
            <person name="Hill D."/>
            <person name="Huminiecki L."/>
            <person name="Iacono M."/>
            <person name="Ikeo K."/>
            <person name="Iwama A."/>
            <person name="Ishikawa T."/>
            <person name="Jakt M."/>
            <person name="Kanapin A."/>
            <person name="Katoh M."/>
            <person name="Kawasawa Y."/>
            <person name="Kelso J."/>
            <person name="Kitamura H."/>
            <person name="Kitano H."/>
            <person name="Kollias G."/>
            <person name="Krishnan S.P."/>
            <person name="Kruger A."/>
            <person name="Kummerfeld S.K."/>
            <person name="Kurochkin I.V."/>
            <person name="Lareau L.F."/>
            <person name="Lazarevic D."/>
            <person name="Lipovich L."/>
            <person name="Liu J."/>
            <person name="Liuni S."/>
            <person name="McWilliam S."/>
            <person name="Madan Babu M."/>
            <person name="Madera M."/>
            <person name="Marchionni L."/>
            <person name="Matsuda H."/>
            <person name="Matsuzawa S."/>
            <person name="Miki H."/>
            <person name="Mignone F."/>
            <person name="Miyake S."/>
            <person name="Morris K."/>
            <person name="Mottagui-Tabar S."/>
            <person name="Mulder N."/>
            <person name="Nakano N."/>
            <person name="Nakauchi H."/>
            <person name="Ng P."/>
            <person name="Nilsson R."/>
            <person name="Nishiguchi S."/>
            <person name="Nishikawa S."/>
            <person name="Nori F."/>
            <person name="Ohara O."/>
            <person name="Okazaki Y."/>
            <person name="Orlando V."/>
            <person name="Pang K.C."/>
            <person name="Pavan W.J."/>
            <person name="Pavesi G."/>
            <person name="Pesole G."/>
            <person name="Petrovsky N."/>
            <person name="Piazza S."/>
            <person name="Reed J."/>
            <person name="Reid J.F."/>
            <person name="Ring B.Z."/>
            <person name="Ringwald M."/>
            <person name="Rost B."/>
            <person name="Ruan Y."/>
            <person name="Salzberg S.L."/>
            <person name="Sandelin A."/>
            <person name="Schneider C."/>
            <person name="Schoenbach C."/>
            <person name="Sekiguchi K."/>
            <person name="Semple C.A."/>
            <person name="Seno S."/>
            <person name="Sessa L."/>
            <person name="Sheng Y."/>
            <person name="Shibata Y."/>
            <person name="Shimada H."/>
            <person name="Shimada K."/>
            <person name="Silva D."/>
            <person name="Sinclair B."/>
            <person name="Sperling S."/>
            <person name="Stupka E."/>
            <person name="Sugiura K."/>
            <person name="Sultana R."/>
            <person name="Takenaka Y."/>
            <person name="Taki K."/>
            <person name="Tammoja K."/>
            <person name="Tan S.L."/>
            <person name="Tang S."/>
            <person name="Taylor M.S."/>
            <person name="Tegner J."/>
            <person name="Teichmann S.A."/>
            <person name="Ueda H.R."/>
            <person name="van Nimwegen E."/>
            <person name="Verardo R."/>
            <person name="Wei C.L."/>
            <person name="Yagi K."/>
            <person name="Yamanishi H."/>
            <person name="Zabarovsky E."/>
            <person name="Zhu S."/>
            <person name="Zimmer A."/>
            <person name="Hide W."/>
            <person name="Bult C."/>
            <person name="Grimmond S.M."/>
            <person name="Teasdale R.D."/>
            <person name="Liu E.T."/>
            <person name="Brusic V."/>
            <person name="Quackenbush J."/>
            <person name="Wahlestedt C."/>
            <person name="Mattick J.S."/>
            <person name="Hume D.A."/>
            <person name="Kai C."/>
            <person name="Sasaki D."/>
            <person name="Tomaru Y."/>
            <person name="Fukuda S."/>
            <person name="Kanamori-Katayama M."/>
            <person name="Suzuki M."/>
            <person name="Aoki J."/>
            <person name="Arakawa T."/>
            <person name="Iida J."/>
            <person name="Imamura K."/>
            <person name="Itoh M."/>
            <person name="Kato T."/>
            <person name="Kawaji H."/>
            <person name="Kawagashira N."/>
            <person name="Kawashima T."/>
            <person name="Kojima M."/>
            <person name="Kondo S."/>
            <person name="Konno H."/>
            <person name="Nakano K."/>
            <person name="Ninomiya N."/>
            <person name="Nishio T."/>
            <person name="Okada M."/>
            <person name="Plessy C."/>
            <person name="Shibata K."/>
            <person name="Shiraki T."/>
            <person name="Suzuki S."/>
            <person name="Tagami M."/>
            <person name="Waki K."/>
            <person name="Watahiki A."/>
            <person name="Okamura-Oho Y."/>
            <person name="Suzuki H."/>
            <person name="Kawai J."/>
            <person name="Hayashizaki Y."/>
        </authorList>
    </citation>
    <scope>NUCLEOTIDE SEQUENCE [LARGE SCALE MRNA] OF 1263-1403 (ISOFORM 1)</scope>
    <source>
        <strain>C57BL/6J</strain>
    </source>
</reference>
<reference key="5">
    <citation type="journal article" date="2003" name="J. Biol. Chem.">
        <title>Adipocyte protein S3-12 coats nascent lipid droplets.</title>
        <authorList>
            <person name="Wolins N.E."/>
            <person name="Skinner J.R."/>
            <person name="Schoenfish M.J."/>
            <person name="Tzekov A."/>
            <person name="Bensch K.G."/>
            <person name="Bickel P.E."/>
        </authorList>
    </citation>
    <scope>FUNCTION</scope>
    <scope>SUBCELLULAR LOCATION</scope>
    <scope>TISSUE SPECIFICITY</scope>
</reference>
<reference key="6">
    <citation type="journal article" date="2004" name="Diabetes">
        <title>Adipose tissue expression of the lipid droplet-associating proteins S3-12 and perilipin is controlled by peroxisome proliferator-activated receptor-gamma.</title>
        <authorList>
            <person name="Dalen K.T."/>
            <person name="Schoonjans K."/>
            <person name="Ulven S.M."/>
            <person name="Weedon-Fekjaer M.S."/>
            <person name="Bentzen T.G."/>
            <person name="Koutnikova H."/>
            <person name="Auwerx J."/>
            <person name="Nebb H.I."/>
        </authorList>
    </citation>
    <scope>INDUCTION</scope>
    <scope>TISSUE SPECIFICITY</scope>
</reference>
<reference key="7">
    <citation type="journal article" date="2005" name="J. Biol. Chem.">
        <title>S3-12, Adipophilin, and TIP47 package lipid in adipocytes.</title>
        <authorList>
            <person name="Wolins N.E."/>
            <person name="Quaynor B.K."/>
            <person name="Skinner J.R."/>
            <person name="Schoenfish M.J."/>
            <person name="Tzekov A."/>
            <person name="Bickel P.E."/>
        </authorList>
    </citation>
    <scope>FUNCTION</scope>
    <scope>SUBCELLULAR LOCATION</scope>
</reference>
<reference key="8">
    <citation type="journal article" date="2010" name="Cell">
        <title>A tissue-specific atlas of mouse protein phosphorylation and expression.</title>
        <authorList>
            <person name="Huttlin E.L."/>
            <person name="Jedrychowski M.P."/>
            <person name="Elias J.E."/>
            <person name="Goswami T."/>
            <person name="Rad R."/>
            <person name="Beausoleil S.A."/>
            <person name="Villen J."/>
            <person name="Haas W."/>
            <person name="Sowa M.E."/>
            <person name="Gygi S.P."/>
        </authorList>
    </citation>
    <scope>PHOSPHORYLATION [LARGE SCALE ANALYSIS] AT SER-25; SER-31; SER-1281 AND THR-1287</scope>
    <scope>IDENTIFICATION BY MASS SPECTROMETRY [LARGE SCALE ANALYSIS]</scope>
    <source>
        <tissue>Brown adipose tissue</tissue>
        <tissue>Heart</tissue>
        <tissue>Lung</tissue>
        <tissue>Pancreas</tissue>
    </source>
</reference>
<protein>
    <recommendedName>
        <fullName>Perilipin-4</fullName>
    </recommendedName>
    <alternativeName>
        <fullName>Adipocyte protein S3-12</fullName>
    </alternativeName>
</protein>
<name>PLIN4_MOUSE</name>
<sequence>MSASGDGTRVPPKSKGKTLSSFFGSLPGFSSARNLVSHTHSSTSTKDLQTATDPSGTPAPSSKVSTNSQMAGDAAGLLQPSEQTAGDKDMGSFSVTSSEDAFSGVFGIMDAAKGMVQGGLGATQSALVGTKEAVSGGVMGAVGVAKGLVKGGLDTSKNVLTNTKDTVTTGVMGAANMAKGTVQTGLDTTKSVVMGTKDTVATGLAGAVNVAKGTIQGGLDTTKSVVMGTKDTVTTGLTGAVNVAKGVVQGGLDTTKSVVMGTKDTVTTGLTGAMNVAKGTAQMGIDTSKTVLTGTKDTVCAGATGAINVAKGAAQGGLDTTKSVLIGTKDTVTTGLTGAVNVAKGAVQGGLDTTKSVVMGTKDTVTTGLTGAMNVAKGTAQMGLGTSKTVLTGTKDTVCAGLTGAINVAKGAAQGGLDTTKSVLMGTKDTVTTGLTGAVNVAKGTIQGGLDTTKSVVMGTKDTVTTGLTGAVNVAKGTIQGGLDTTKSVVMGTKDTVTTGLTGAVNVAKGAAQGGLDTTKSVVMGTKDTVTTGLTGAMNVAKGTAQMGLGTSKTVLTGTKDTVCAGLTGAINVAKGAAQGGLDTTKSVLMGTKDTVTTGLTGAVNVAKGTIQGGLDTTKSVVMGTKDTVTTGLTGAVNVAKGAVQGGLDTTKSVVMGTKDTVTTGLTGALNVAKGTAQMGIDTSKTVLIGTKDTVCAGATGAINMAKGAAQGGLDTTKSVLMGTKDTVTTGLTGAINVAKGSAQGGLDTTKSVLIGTKDTVTTGLTGALNVAKGTVQTGLDTSQRVLTGTKDNVYAGVTGAVNVAKGTIQGGLDTTKSVVMGTKDTVTTGLTGAVNVAKGAVQGGLDTTKSVVMGTKDTVTTGLTGAMNVAKGTAQMGIDTSKTVLTGTKDTVCAGLTGAINVAKGATQGGLDTTKSVLMGTKDTVTTGLTGAINVAKGAAQGGLDTTKSVLLGTKDTVTTGLTGAANVAKETVQMGLDTSKNILMDTKDSICAGATGAITVVKGAAQGGLDTSNAALTGTMDTAKGTVQTSLDTSKHMLIGMKDTVCAGVTSAMNMAKGIHKNTDTTRDTQSSVLAHSGNVATNAIHTGVHTVPSSLSGSHSIICHEPSIYRATNHGVGQAILTSTESLCCETSSFSDKYGLGHVTEPRADTKTLVSGMASSACAATRSVEECGQLAATGFAALPDELKGLGDIFQPMTTEEQAQLAVSESGPRVLSADRGSYYIRLGDLAPSFRQRAFEHALSHIQHNQFQARAALAQLQEAFQMTDMTMEAACGKLCSDQSLNTMVEAVGSHEMRASVAQDRLCTLAHQLHAAYSSLVTSLQGLPEVQQQAGQARHSLCKLYGLVSSEAGSELQTEQLAQSSAGVVEAWQGLEVLLEKLQQNPPLSWLVGPFTSMPCGQL</sequence>
<keyword id="KW-0025">Alternative splicing</keyword>
<keyword id="KW-1003">Cell membrane</keyword>
<keyword id="KW-0963">Cytoplasm</keyword>
<keyword id="KW-0551">Lipid droplet</keyword>
<keyword id="KW-0472">Membrane</keyword>
<keyword id="KW-0597">Phosphoprotein</keyword>
<keyword id="KW-1185">Reference proteome</keyword>
<keyword id="KW-0677">Repeat</keyword>
<feature type="chain" id="PRO_0000297560" description="Perilipin-4">
    <location>
        <begin position="1"/>
        <end position="1403"/>
    </location>
</feature>
<feature type="repeat" description="1">
    <location>
        <begin position="104"/>
        <end position="136"/>
    </location>
</feature>
<feature type="repeat" description="2">
    <location>
        <begin position="137"/>
        <end position="169"/>
    </location>
</feature>
<feature type="repeat" description="3">
    <location>
        <begin position="170"/>
        <end position="202"/>
    </location>
</feature>
<feature type="repeat" description="4">
    <location>
        <begin position="203"/>
        <end position="235"/>
    </location>
</feature>
<feature type="repeat" description="5">
    <location>
        <begin position="236"/>
        <end position="268"/>
    </location>
</feature>
<feature type="repeat" description="6">
    <location>
        <begin position="269"/>
        <end position="301"/>
    </location>
</feature>
<feature type="repeat" description="7">
    <location>
        <begin position="302"/>
        <end position="334"/>
    </location>
</feature>
<feature type="repeat" description="8">
    <location>
        <begin position="335"/>
        <end position="367"/>
    </location>
</feature>
<feature type="repeat" description="9">
    <location>
        <begin position="368"/>
        <end position="400"/>
    </location>
</feature>
<feature type="repeat" description="10">
    <location>
        <begin position="401"/>
        <end position="433"/>
    </location>
</feature>
<feature type="repeat" description="11">
    <location>
        <begin position="434"/>
        <end position="466"/>
    </location>
</feature>
<feature type="repeat" description="12">
    <location>
        <begin position="467"/>
        <end position="499"/>
    </location>
</feature>
<feature type="repeat" description="13">
    <location>
        <begin position="500"/>
        <end position="532"/>
    </location>
</feature>
<feature type="repeat" description="14">
    <location>
        <begin position="533"/>
        <end position="565"/>
    </location>
</feature>
<feature type="repeat" description="15">
    <location>
        <begin position="566"/>
        <end position="598"/>
    </location>
</feature>
<feature type="repeat" description="16">
    <location>
        <begin position="599"/>
        <end position="631"/>
    </location>
</feature>
<feature type="repeat" description="17">
    <location>
        <begin position="632"/>
        <end position="664"/>
    </location>
</feature>
<feature type="repeat" description="18">
    <location>
        <begin position="665"/>
        <end position="697"/>
    </location>
</feature>
<feature type="repeat" description="19">
    <location>
        <begin position="698"/>
        <end position="730"/>
    </location>
</feature>
<feature type="repeat" description="20">
    <location>
        <begin position="731"/>
        <end position="763"/>
    </location>
</feature>
<feature type="repeat" description="21">
    <location>
        <begin position="764"/>
        <end position="796"/>
    </location>
</feature>
<feature type="repeat" description="22">
    <location>
        <begin position="797"/>
        <end position="829"/>
    </location>
</feature>
<feature type="repeat" description="23">
    <location>
        <begin position="830"/>
        <end position="862"/>
    </location>
</feature>
<feature type="repeat" description="24">
    <location>
        <begin position="863"/>
        <end position="895"/>
    </location>
</feature>
<feature type="repeat" description="25">
    <location>
        <begin position="896"/>
        <end position="928"/>
    </location>
</feature>
<feature type="repeat" description="26">
    <location>
        <begin position="929"/>
        <end position="961"/>
    </location>
</feature>
<feature type="repeat" description="27">
    <location>
        <begin position="962"/>
        <end position="994"/>
    </location>
</feature>
<feature type="repeat" description="28">
    <location>
        <begin position="995"/>
        <end position="1027"/>
    </location>
</feature>
<feature type="repeat" description="29">
    <location>
        <begin position="1028"/>
        <end position="1060"/>
    </location>
</feature>
<feature type="region of interest" description="Disordered" evidence="1">
    <location>
        <begin position="1"/>
        <end position="21"/>
    </location>
</feature>
<feature type="region of interest" description="Disordered" evidence="1">
    <location>
        <begin position="33"/>
        <end position="70"/>
    </location>
</feature>
<feature type="region of interest" description="29 X 33 AA approximate tandem repeat">
    <location>
        <begin position="104"/>
        <end position="1060"/>
    </location>
</feature>
<feature type="modified residue" description="Phosphoserine" evidence="8">
    <location>
        <position position="25"/>
    </location>
</feature>
<feature type="modified residue" description="Phosphoserine" evidence="8">
    <location>
        <position position="31"/>
    </location>
</feature>
<feature type="modified residue" description="Phosphoserine" evidence="8">
    <location>
        <position position="1281"/>
    </location>
</feature>
<feature type="modified residue" description="Phosphothreonine" evidence="8">
    <location>
        <position position="1287"/>
    </location>
</feature>
<feature type="splice variant" id="VSP_027279" description="In isoform 2." evidence="6">
    <location>
        <begin position="206"/>
        <end position="601"/>
    </location>
</feature>
<feature type="splice variant" id="VSP_027280" description="In isoform 2." evidence="6">
    <location>
        <begin position="1267"/>
        <end position="1271"/>
    </location>
</feature>
<feature type="sequence conflict" description="In Ref. 1; AAC23666." evidence="7" ref="1">
    <original>V</original>
    <variation>A</variation>
    <location>
        <position position="241"/>
    </location>
</feature>
<feature type="sequence conflict" description="In Ref. 1; AAC23666." evidence="7" ref="1">
    <original>Q</original>
    <variation>H</variation>
    <location>
        <position position="1121"/>
    </location>
</feature>
<feature type="sequence conflict" description="In Ref. 1; AAC23666." evidence="7" ref="1">
    <original>L</original>
    <variation>V</variation>
    <location>
        <position position="1258"/>
    </location>
</feature>
<comment type="function">
    <text evidence="2 4">May play a role in triacylglycerol packaging into adipocytes. May function as a coat protein involved in the biogenesis of lipid droplets.</text>
</comment>
<comment type="subcellular location">
    <subcellularLocation>
        <location evidence="5">Cell membrane</location>
    </subcellularLocation>
    <subcellularLocation>
        <location evidence="2 4">Cytoplasm</location>
    </subcellularLocation>
    <subcellularLocation>
        <location evidence="2 4">Lipid droplet</location>
    </subcellularLocation>
    <text evidence="2 4">Nascent lipid droplet surface-associated; association with lipid droplets is triacylglycerol synthesis-dependent.</text>
</comment>
<comment type="alternative products">
    <event type="alternative splicing"/>
    <isoform>
        <id>O88492-1</id>
        <name>1</name>
        <sequence type="displayed"/>
    </isoform>
    <isoform>
        <id>O88492-2</id>
        <name>2</name>
        <sequence type="described" ref="VSP_027279 VSP_027280"/>
    </isoform>
</comment>
<comment type="tissue specificity">
    <text evidence="2 3 5">Specifically expressed in white adipose tissue and also weakly detected in heart and skeletal muscle (at protein level).</text>
</comment>
<comment type="induction">
    <text evidence="3">Up-regulated by PPARG and during adipocyte differentiation.</text>
</comment>
<comment type="similarity">
    <text evidence="7">Belongs to the perilipin family.</text>
</comment>
<comment type="sequence caution" evidence="7">
    <conflict type="erroneous initiation">
        <sequence resource="EMBL-CDS" id="BAC37834"/>
    </conflict>
</comment>
<comment type="sequence caution" evidence="7">
    <conflict type="erroneous initiation">
        <sequence resource="EMBL-CDS" id="BAD32564"/>
    </conflict>
    <text>Truncated N-terminus.</text>
</comment>
<gene>
    <name type="primary">Plin4</name>
    <name type="synonym">Kiaa1881</name>
</gene>
<evidence type="ECO:0000256" key="1">
    <source>
        <dbReference type="SAM" id="MobiDB-lite"/>
    </source>
</evidence>
<evidence type="ECO:0000269" key="2">
    <source>
    </source>
</evidence>
<evidence type="ECO:0000269" key="3">
    <source>
    </source>
</evidence>
<evidence type="ECO:0000269" key="4">
    <source>
    </source>
</evidence>
<evidence type="ECO:0000269" key="5">
    <source>
    </source>
</evidence>
<evidence type="ECO:0000303" key="6">
    <source>
    </source>
</evidence>
<evidence type="ECO:0000305" key="7"/>
<evidence type="ECO:0007744" key="8">
    <source>
    </source>
</evidence>
<organism>
    <name type="scientific">Mus musculus</name>
    <name type="common">Mouse</name>
    <dbReference type="NCBI Taxonomy" id="10090"/>
    <lineage>
        <taxon>Eukaryota</taxon>
        <taxon>Metazoa</taxon>
        <taxon>Chordata</taxon>
        <taxon>Craniata</taxon>
        <taxon>Vertebrata</taxon>
        <taxon>Euteleostomi</taxon>
        <taxon>Mammalia</taxon>
        <taxon>Eutheria</taxon>
        <taxon>Euarchontoglires</taxon>
        <taxon>Glires</taxon>
        <taxon>Rodentia</taxon>
        <taxon>Myomorpha</taxon>
        <taxon>Muroidea</taxon>
        <taxon>Muridae</taxon>
        <taxon>Murinae</taxon>
        <taxon>Mus</taxon>
        <taxon>Mus</taxon>
    </lineage>
</organism>
<proteinExistence type="evidence at protein level"/>
<dbReference type="EMBL" id="AF064748">
    <property type="protein sequence ID" value="AAC23666.1"/>
    <property type="molecule type" value="mRNA"/>
</dbReference>
<dbReference type="EMBL" id="AK173286">
    <property type="protein sequence ID" value="BAD32564.1"/>
    <property type="status" value="ALT_INIT"/>
    <property type="molecule type" value="Transcribed_RNA"/>
</dbReference>
<dbReference type="EMBL" id="CT009719">
    <property type="status" value="NOT_ANNOTATED_CDS"/>
    <property type="molecule type" value="Genomic_DNA"/>
</dbReference>
<dbReference type="EMBL" id="AK080156">
    <property type="protein sequence ID" value="BAC37834.1"/>
    <property type="status" value="ALT_INIT"/>
    <property type="molecule type" value="mRNA"/>
</dbReference>
<dbReference type="CCDS" id="CCDS79565.1">
    <molecule id="O88492-1"/>
</dbReference>
<dbReference type="PIR" id="T17372">
    <property type="entry name" value="T17372"/>
</dbReference>
<dbReference type="RefSeq" id="NP_065593.2">
    <molecule id="O88492-1"/>
    <property type="nucleotide sequence ID" value="NM_020568.4"/>
</dbReference>
<dbReference type="SMR" id="O88492"/>
<dbReference type="BioGRID" id="208292">
    <property type="interactions" value="4"/>
</dbReference>
<dbReference type="FunCoup" id="O88492">
    <property type="interactions" value="192"/>
</dbReference>
<dbReference type="IntAct" id="O88492">
    <property type="interactions" value="6"/>
</dbReference>
<dbReference type="STRING" id="10090.ENSMUSP00000139859"/>
<dbReference type="GlyGen" id="O88492">
    <property type="glycosylation" value="2 sites, 1 O-linked glycan (2 sites)"/>
</dbReference>
<dbReference type="iPTMnet" id="O88492"/>
<dbReference type="PhosphoSitePlus" id="O88492"/>
<dbReference type="SwissPalm" id="O88492"/>
<dbReference type="jPOST" id="O88492"/>
<dbReference type="PaxDb" id="10090-ENSMUSP00000139859"/>
<dbReference type="PeptideAtlas" id="O88492"/>
<dbReference type="ProteomicsDB" id="289618">
    <molecule id="O88492-1"/>
</dbReference>
<dbReference type="ProteomicsDB" id="289619">
    <molecule id="O88492-2"/>
</dbReference>
<dbReference type="Pumba" id="O88492"/>
<dbReference type="Antibodypedia" id="23665">
    <property type="antibodies" value="112 antibodies from 29 providers"/>
</dbReference>
<dbReference type="DNASU" id="57435"/>
<dbReference type="Ensembl" id="ENSMUST00000190703.7">
    <molecule id="O88492-1"/>
    <property type="protein sequence ID" value="ENSMUSP00000139859.2"/>
    <property type="gene ID" value="ENSMUSG00000002831.16"/>
</dbReference>
<dbReference type="GeneID" id="57435"/>
<dbReference type="KEGG" id="mmu:57435"/>
<dbReference type="UCSC" id="uc008day.2">
    <molecule id="O88492-1"/>
    <property type="organism name" value="mouse"/>
</dbReference>
<dbReference type="AGR" id="MGI:1929709"/>
<dbReference type="CTD" id="729359"/>
<dbReference type="MGI" id="MGI:1929709">
    <property type="gene designation" value="Plin4"/>
</dbReference>
<dbReference type="VEuPathDB" id="HostDB:ENSMUSG00000002831"/>
<dbReference type="eggNOG" id="KOG4744">
    <property type="taxonomic scope" value="Eukaryota"/>
</dbReference>
<dbReference type="GeneTree" id="ENSGT00950000182920"/>
<dbReference type="HOGENOM" id="CLU_273270_0_0_1"/>
<dbReference type="InParanoid" id="O88492"/>
<dbReference type="PhylomeDB" id="O88492"/>
<dbReference type="TreeFam" id="TF328397"/>
<dbReference type="BioGRID-ORCS" id="57435">
    <property type="hits" value="3 hits in 70 CRISPR screens"/>
</dbReference>
<dbReference type="ChiTaRS" id="Plin4">
    <property type="organism name" value="mouse"/>
</dbReference>
<dbReference type="PRO" id="PR:O88492"/>
<dbReference type="Proteomes" id="UP000000589">
    <property type="component" value="Chromosome 17"/>
</dbReference>
<dbReference type="RNAct" id="O88492">
    <property type="molecule type" value="protein"/>
</dbReference>
<dbReference type="Bgee" id="ENSMUSG00000002831">
    <property type="expression patterns" value="Expressed in epididymal fat pad and 120 other cell types or tissues"/>
</dbReference>
<dbReference type="ExpressionAtlas" id="O88492">
    <property type="expression patterns" value="baseline and differential"/>
</dbReference>
<dbReference type="GO" id="GO:0005737">
    <property type="term" value="C:cytoplasm"/>
    <property type="evidence" value="ECO:0007669"/>
    <property type="project" value="UniProtKB-SubCell"/>
</dbReference>
<dbReference type="GO" id="GO:0005811">
    <property type="term" value="C:lipid droplet"/>
    <property type="evidence" value="ECO:0000304"/>
    <property type="project" value="Reactome"/>
</dbReference>
<dbReference type="GO" id="GO:0005886">
    <property type="term" value="C:plasma membrane"/>
    <property type="evidence" value="ECO:0000314"/>
    <property type="project" value="MGI"/>
</dbReference>
<dbReference type="FunFam" id="1.20.120.340:FF:000007">
    <property type="entry name" value="Perilipin 4"/>
    <property type="match status" value="1"/>
</dbReference>
<dbReference type="Gene3D" id="1.20.120.340">
    <property type="entry name" value="Flagellar protein FliS"/>
    <property type="match status" value="1"/>
</dbReference>
<dbReference type="InterPro" id="IPR004279">
    <property type="entry name" value="Perilipin"/>
</dbReference>
<dbReference type="PANTHER" id="PTHR47538">
    <property type="entry name" value="PERILIPIN 4"/>
    <property type="match status" value="1"/>
</dbReference>
<dbReference type="PANTHER" id="PTHR47538:SF1">
    <property type="entry name" value="PERILIPIN-4"/>
    <property type="match status" value="1"/>
</dbReference>
<dbReference type="Pfam" id="PF03036">
    <property type="entry name" value="Perilipin"/>
    <property type="match status" value="1"/>
</dbReference>
<dbReference type="SUPFAM" id="SSF109775">
    <property type="entry name" value="Mannose-6-phosphate receptor binding protein 1 (Tip47), C-terminal domain"/>
    <property type="match status" value="1"/>
</dbReference>
<accession>O88492</accession>
<accession>E9QN72</accession>
<accession>Q69Z80</accession>
<accession>Q8BNV5</accession>